<reference key="1">
    <citation type="submission" date="2000-04" db="EMBL/GenBank/DDBJ databases">
        <title>Streptomyces thermocyaneoviolaceus xylA (xylose isomerase).</title>
        <authorList>
            <person name="Kwak Y.-Y."/>
            <person name="Heo G.-Y."/>
            <person name="Shin J.-H."/>
            <person name="Jang H.-S."/>
            <person name="Joo G.-J."/>
            <person name="Rhee I.-K."/>
        </authorList>
    </citation>
    <scope>NUCLEOTIDE SEQUENCE [GENOMIC DNA]</scope>
    <source>
        <strain>KCCM 40049</strain>
    </source>
</reference>
<dbReference type="EC" id="5.3.1.5" evidence="1"/>
<dbReference type="EMBL" id="AF257177">
    <property type="protein sequence ID" value="AAF68977.1"/>
    <property type="molecule type" value="Genomic_DNA"/>
</dbReference>
<dbReference type="SMR" id="Q9L558"/>
<dbReference type="GO" id="GO:0005737">
    <property type="term" value="C:cytoplasm"/>
    <property type="evidence" value="ECO:0007669"/>
    <property type="project" value="UniProtKB-SubCell"/>
</dbReference>
<dbReference type="GO" id="GO:0000287">
    <property type="term" value="F:magnesium ion binding"/>
    <property type="evidence" value="ECO:0007669"/>
    <property type="project" value="UniProtKB-UniRule"/>
</dbReference>
<dbReference type="GO" id="GO:0009045">
    <property type="term" value="F:xylose isomerase activity"/>
    <property type="evidence" value="ECO:0007669"/>
    <property type="project" value="UniProtKB-UniRule"/>
</dbReference>
<dbReference type="GO" id="GO:0042732">
    <property type="term" value="P:D-xylose metabolic process"/>
    <property type="evidence" value="ECO:0007669"/>
    <property type="project" value="UniProtKB-UniRule"/>
</dbReference>
<dbReference type="FunFam" id="3.20.20.150:FF:000009">
    <property type="entry name" value="Xylose isomerase"/>
    <property type="match status" value="1"/>
</dbReference>
<dbReference type="Gene3D" id="3.20.20.150">
    <property type="entry name" value="Divalent-metal-dependent TIM barrel enzymes"/>
    <property type="match status" value="1"/>
</dbReference>
<dbReference type="HAMAP" id="MF_00455">
    <property type="entry name" value="Xylose_isom_A"/>
    <property type="match status" value="1"/>
</dbReference>
<dbReference type="InterPro" id="IPR036237">
    <property type="entry name" value="Xyl_isomerase-like_sf"/>
</dbReference>
<dbReference type="InterPro" id="IPR013022">
    <property type="entry name" value="Xyl_isomerase-like_TIM-brl"/>
</dbReference>
<dbReference type="InterPro" id="IPR013453">
    <property type="entry name" value="XylA_actinobac"/>
</dbReference>
<dbReference type="InterPro" id="IPR001998">
    <property type="entry name" value="Xylose_isomerase"/>
</dbReference>
<dbReference type="NCBIfam" id="TIGR02631">
    <property type="entry name" value="xylA_Arthro"/>
    <property type="match status" value="1"/>
</dbReference>
<dbReference type="PANTHER" id="PTHR48408">
    <property type="match status" value="1"/>
</dbReference>
<dbReference type="PANTHER" id="PTHR48408:SF1">
    <property type="entry name" value="XYLOSE ISOMERASE"/>
    <property type="match status" value="1"/>
</dbReference>
<dbReference type="Pfam" id="PF01261">
    <property type="entry name" value="AP_endonuc_2"/>
    <property type="match status" value="1"/>
</dbReference>
<dbReference type="PRINTS" id="PR00688">
    <property type="entry name" value="XYLOSISMRASE"/>
</dbReference>
<dbReference type="SUPFAM" id="SSF51658">
    <property type="entry name" value="Xylose isomerase-like"/>
    <property type="match status" value="1"/>
</dbReference>
<dbReference type="PROSITE" id="PS51415">
    <property type="entry name" value="XYLOSE_ISOMERASE"/>
    <property type="match status" value="1"/>
</dbReference>
<comment type="catalytic activity">
    <reaction evidence="1">
        <text>alpha-D-xylose = alpha-D-xylulofuranose</text>
        <dbReference type="Rhea" id="RHEA:22816"/>
        <dbReference type="ChEBI" id="CHEBI:28518"/>
        <dbReference type="ChEBI" id="CHEBI:188998"/>
        <dbReference type="EC" id="5.3.1.5"/>
    </reaction>
</comment>
<comment type="cofactor">
    <cofactor evidence="1">
        <name>Mg(2+)</name>
        <dbReference type="ChEBI" id="CHEBI:18420"/>
    </cofactor>
    <text evidence="1">Binds 2 magnesium ions per subunit.</text>
</comment>
<comment type="subunit">
    <text evidence="1">Homotetramer.</text>
</comment>
<comment type="subcellular location">
    <subcellularLocation>
        <location evidence="1">Cytoplasm</location>
    </subcellularLocation>
</comment>
<comment type="similarity">
    <text evidence="1">Belongs to the xylose isomerase family.</text>
</comment>
<gene>
    <name evidence="1" type="primary">xylA</name>
</gene>
<keyword id="KW-0119">Carbohydrate metabolism</keyword>
<keyword id="KW-0963">Cytoplasm</keyword>
<keyword id="KW-0413">Isomerase</keyword>
<keyword id="KW-0460">Magnesium</keyword>
<keyword id="KW-0479">Metal-binding</keyword>
<keyword id="KW-0859">Xylose metabolism</keyword>
<name>XYLA_STRTM</name>
<evidence type="ECO:0000255" key="1">
    <source>
        <dbReference type="HAMAP-Rule" id="MF_00455"/>
    </source>
</evidence>
<sequence length="388" mass="42932">MNYQPTPEDRFTFGLWTVGWQGRDPFGDATRPALDPVEAVQRLAELGAYGVTFHDDDLIPFGSSDAEREAHVKRFRQALDATGMTVPMATTNLFTHPVFKDGAFTANDRDVRRYALRKTIRNIDLAVELGAKVYVAWGGREGAESGAAKDVRAALDRMKEAFDLLGEYVTSQGYDIRFAIEPKPNEPRGDILLPTIGHALAFIERLERPELYGVNPEVGHEQMAGLNFPHGIAQALWAGKLFHIDLNGQSGIKYDQDLRFGAGDLRAAFWLVDLLESAGWEGPRHFDFKPPRTEDIDGVWASAAGCMRNYLILKERAAAFRADPEVQEALRAARLDQLAEPTAADGLQALLADRTAYEDFDVDAAAARGMAFERLDQLAMDHLLGARG</sequence>
<organism>
    <name type="scientific">Streptomyces thermocyaneoviolaceus</name>
    <dbReference type="NCBI Taxonomy" id="106355"/>
    <lineage>
        <taxon>Bacteria</taxon>
        <taxon>Bacillati</taxon>
        <taxon>Actinomycetota</taxon>
        <taxon>Actinomycetes</taxon>
        <taxon>Kitasatosporales</taxon>
        <taxon>Streptomycetaceae</taxon>
        <taxon>Streptomyces</taxon>
    </lineage>
</organism>
<proteinExistence type="inferred from homology"/>
<protein>
    <recommendedName>
        <fullName evidence="1">Xylose isomerase</fullName>
        <ecNumber evidence="1">5.3.1.5</ecNumber>
    </recommendedName>
</protein>
<feature type="chain" id="PRO_0000195807" description="Xylose isomerase">
    <location>
        <begin position="1"/>
        <end position="388"/>
    </location>
</feature>
<feature type="active site" evidence="1">
    <location>
        <position position="54"/>
    </location>
</feature>
<feature type="active site" evidence="1">
    <location>
        <position position="57"/>
    </location>
</feature>
<feature type="binding site" evidence="1">
    <location>
        <position position="181"/>
    </location>
    <ligand>
        <name>Mg(2+)</name>
        <dbReference type="ChEBI" id="CHEBI:18420"/>
        <label>1</label>
    </ligand>
</feature>
<feature type="binding site" evidence="1">
    <location>
        <position position="217"/>
    </location>
    <ligand>
        <name>Mg(2+)</name>
        <dbReference type="ChEBI" id="CHEBI:18420"/>
        <label>1</label>
    </ligand>
</feature>
<feature type="binding site" evidence="1">
    <location>
        <position position="217"/>
    </location>
    <ligand>
        <name>Mg(2+)</name>
        <dbReference type="ChEBI" id="CHEBI:18420"/>
        <label>2</label>
    </ligand>
</feature>
<feature type="binding site" evidence="1">
    <location>
        <position position="220"/>
    </location>
    <ligand>
        <name>Mg(2+)</name>
        <dbReference type="ChEBI" id="CHEBI:18420"/>
        <label>2</label>
    </ligand>
</feature>
<feature type="binding site" evidence="1">
    <location>
        <position position="245"/>
    </location>
    <ligand>
        <name>Mg(2+)</name>
        <dbReference type="ChEBI" id="CHEBI:18420"/>
        <label>1</label>
    </ligand>
</feature>
<feature type="binding site" evidence="1">
    <location>
        <position position="255"/>
    </location>
    <ligand>
        <name>Mg(2+)</name>
        <dbReference type="ChEBI" id="CHEBI:18420"/>
        <label>2</label>
    </ligand>
</feature>
<feature type="binding site" evidence="1">
    <location>
        <position position="257"/>
    </location>
    <ligand>
        <name>Mg(2+)</name>
        <dbReference type="ChEBI" id="CHEBI:18420"/>
        <label>2</label>
    </ligand>
</feature>
<feature type="binding site" evidence="1">
    <location>
        <position position="287"/>
    </location>
    <ligand>
        <name>Mg(2+)</name>
        <dbReference type="ChEBI" id="CHEBI:18420"/>
        <label>1</label>
    </ligand>
</feature>
<accession>Q9L558</accession>